<gene>
    <name evidence="2" type="primary">ndvA</name>
    <name type="ordered locus">RPD_1325</name>
</gene>
<reference key="1">
    <citation type="submission" date="2006-03" db="EMBL/GenBank/DDBJ databases">
        <title>Complete sequence of Rhodopseudomonas palustris BisB5.</title>
        <authorList>
            <consortium name="US DOE Joint Genome Institute"/>
            <person name="Copeland A."/>
            <person name="Lucas S."/>
            <person name="Lapidus A."/>
            <person name="Barry K."/>
            <person name="Detter J.C."/>
            <person name="Glavina del Rio T."/>
            <person name="Hammon N."/>
            <person name="Israni S."/>
            <person name="Dalin E."/>
            <person name="Tice H."/>
            <person name="Pitluck S."/>
            <person name="Chain P."/>
            <person name="Malfatti S."/>
            <person name="Shin M."/>
            <person name="Vergez L."/>
            <person name="Schmutz J."/>
            <person name="Larimer F."/>
            <person name="Land M."/>
            <person name="Hauser L."/>
            <person name="Pelletier D.A."/>
            <person name="Kyrpides N."/>
            <person name="Lykidis A."/>
            <person name="Oda Y."/>
            <person name="Harwood C.S."/>
            <person name="Richardson P."/>
        </authorList>
    </citation>
    <scope>NUCLEOTIDE SEQUENCE [LARGE SCALE GENOMIC DNA]</scope>
    <source>
        <strain>BisB5</strain>
    </source>
</reference>
<proteinExistence type="inferred from homology"/>
<feature type="chain" id="PRO_0000290255" description="Beta-(1--&gt;2)glucan export ATP-binding/permease protein NdvA">
    <location>
        <begin position="1"/>
        <end position="602"/>
    </location>
</feature>
<feature type="transmembrane region" description="Helical" evidence="2">
    <location>
        <begin position="22"/>
        <end position="42"/>
    </location>
</feature>
<feature type="transmembrane region" description="Helical" evidence="2">
    <location>
        <begin position="68"/>
        <end position="88"/>
    </location>
</feature>
<feature type="transmembrane region" description="Helical" evidence="2">
    <location>
        <begin position="146"/>
        <end position="166"/>
    </location>
</feature>
<feature type="transmembrane region" description="Helical" evidence="2">
    <location>
        <begin position="167"/>
        <end position="187"/>
    </location>
</feature>
<feature type="transmembrane region" description="Helical" evidence="2">
    <location>
        <begin position="254"/>
        <end position="274"/>
    </location>
</feature>
<feature type="transmembrane region" description="Helical" evidence="2">
    <location>
        <begin position="276"/>
        <end position="296"/>
    </location>
</feature>
<feature type="domain" description="ABC transmembrane type-1" evidence="2">
    <location>
        <begin position="21"/>
        <end position="311"/>
    </location>
</feature>
<feature type="domain" description="ABC transporter" evidence="2">
    <location>
        <begin position="345"/>
        <end position="579"/>
    </location>
</feature>
<feature type="binding site" evidence="2">
    <location>
        <begin position="378"/>
        <end position="385"/>
    </location>
    <ligand>
        <name>ATP</name>
        <dbReference type="ChEBI" id="CHEBI:30616"/>
    </ligand>
</feature>
<dbReference type="EC" id="7.5.2.3" evidence="2"/>
<dbReference type="EMBL" id="CP000283">
    <property type="protein sequence ID" value="ABE38563.1"/>
    <property type="molecule type" value="Genomic_DNA"/>
</dbReference>
<dbReference type="SMR" id="Q13BH6"/>
<dbReference type="STRING" id="316057.RPD_1325"/>
<dbReference type="KEGG" id="rpd:RPD_1325"/>
<dbReference type="eggNOG" id="COG1132">
    <property type="taxonomic scope" value="Bacteria"/>
</dbReference>
<dbReference type="HOGENOM" id="CLU_000604_84_8_5"/>
<dbReference type="BioCyc" id="RPAL316057:RPD_RS06710-MONOMER"/>
<dbReference type="Proteomes" id="UP000001818">
    <property type="component" value="Chromosome"/>
</dbReference>
<dbReference type="GO" id="GO:0005886">
    <property type="term" value="C:plasma membrane"/>
    <property type="evidence" value="ECO:0007669"/>
    <property type="project" value="UniProtKB-SubCell"/>
</dbReference>
<dbReference type="GO" id="GO:0015441">
    <property type="term" value="F:ABC-type beta-glucan transporter activity"/>
    <property type="evidence" value="ECO:0007669"/>
    <property type="project" value="UniProtKB-EC"/>
</dbReference>
<dbReference type="GO" id="GO:0015421">
    <property type="term" value="F:ABC-type oligopeptide transporter activity"/>
    <property type="evidence" value="ECO:0007669"/>
    <property type="project" value="TreeGrafter"/>
</dbReference>
<dbReference type="GO" id="GO:0005524">
    <property type="term" value="F:ATP binding"/>
    <property type="evidence" value="ECO:0007669"/>
    <property type="project" value="UniProtKB-KW"/>
</dbReference>
<dbReference type="GO" id="GO:0016887">
    <property type="term" value="F:ATP hydrolysis activity"/>
    <property type="evidence" value="ECO:0007669"/>
    <property type="project" value="InterPro"/>
</dbReference>
<dbReference type="CDD" id="cd18562">
    <property type="entry name" value="ABC_6TM_NdvA_beta-glucan_exporter_like"/>
    <property type="match status" value="1"/>
</dbReference>
<dbReference type="FunFam" id="3.40.50.300:FF:000221">
    <property type="entry name" value="Multidrug ABC transporter ATP-binding protein"/>
    <property type="match status" value="1"/>
</dbReference>
<dbReference type="Gene3D" id="1.20.1560.10">
    <property type="entry name" value="ABC transporter type 1, transmembrane domain"/>
    <property type="match status" value="1"/>
</dbReference>
<dbReference type="Gene3D" id="3.40.50.300">
    <property type="entry name" value="P-loop containing nucleotide triphosphate hydrolases"/>
    <property type="match status" value="1"/>
</dbReference>
<dbReference type="InterPro" id="IPR003593">
    <property type="entry name" value="AAA+_ATPase"/>
</dbReference>
<dbReference type="InterPro" id="IPR011527">
    <property type="entry name" value="ABC1_TM_dom"/>
</dbReference>
<dbReference type="InterPro" id="IPR036640">
    <property type="entry name" value="ABC1_TM_sf"/>
</dbReference>
<dbReference type="InterPro" id="IPR003439">
    <property type="entry name" value="ABC_transporter-like_ATP-bd"/>
</dbReference>
<dbReference type="InterPro" id="IPR017871">
    <property type="entry name" value="ABC_transporter-like_CS"/>
</dbReference>
<dbReference type="InterPro" id="IPR027417">
    <property type="entry name" value="P-loop_NTPase"/>
</dbReference>
<dbReference type="InterPro" id="IPR039421">
    <property type="entry name" value="Type_1_exporter"/>
</dbReference>
<dbReference type="NCBIfam" id="NF010178">
    <property type="entry name" value="PRK13657.1"/>
    <property type="match status" value="1"/>
</dbReference>
<dbReference type="PANTHER" id="PTHR43394:SF1">
    <property type="entry name" value="ATP-BINDING CASSETTE SUB-FAMILY B MEMBER 10, MITOCHONDRIAL"/>
    <property type="match status" value="1"/>
</dbReference>
<dbReference type="PANTHER" id="PTHR43394">
    <property type="entry name" value="ATP-DEPENDENT PERMEASE MDL1, MITOCHONDRIAL"/>
    <property type="match status" value="1"/>
</dbReference>
<dbReference type="Pfam" id="PF00664">
    <property type="entry name" value="ABC_membrane"/>
    <property type="match status" value="1"/>
</dbReference>
<dbReference type="Pfam" id="PF00005">
    <property type="entry name" value="ABC_tran"/>
    <property type="match status" value="1"/>
</dbReference>
<dbReference type="SMART" id="SM00382">
    <property type="entry name" value="AAA"/>
    <property type="match status" value="1"/>
</dbReference>
<dbReference type="SUPFAM" id="SSF90123">
    <property type="entry name" value="ABC transporter transmembrane region"/>
    <property type="match status" value="1"/>
</dbReference>
<dbReference type="SUPFAM" id="SSF52540">
    <property type="entry name" value="P-loop containing nucleoside triphosphate hydrolases"/>
    <property type="match status" value="1"/>
</dbReference>
<dbReference type="PROSITE" id="PS50929">
    <property type="entry name" value="ABC_TM1F"/>
    <property type="match status" value="1"/>
</dbReference>
<dbReference type="PROSITE" id="PS00211">
    <property type="entry name" value="ABC_TRANSPORTER_1"/>
    <property type="match status" value="1"/>
</dbReference>
<dbReference type="PROSITE" id="PS50893">
    <property type="entry name" value="ABC_TRANSPORTER_2"/>
    <property type="match status" value="1"/>
</dbReference>
<dbReference type="PROSITE" id="PS51317">
    <property type="entry name" value="NDVA"/>
    <property type="match status" value="1"/>
</dbReference>
<keyword id="KW-0067">ATP-binding</keyword>
<keyword id="KW-0997">Cell inner membrane</keyword>
<keyword id="KW-1003">Cell membrane</keyword>
<keyword id="KW-0472">Membrane</keyword>
<keyword id="KW-0547">Nucleotide-binding</keyword>
<keyword id="KW-0762">Sugar transport</keyword>
<keyword id="KW-1278">Translocase</keyword>
<keyword id="KW-0812">Transmembrane</keyword>
<keyword id="KW-1133">Transmembrane helix</keyword>
<keyword id="KW-0813">Transport</keyword>
<protein>
    <recommendedName>
        <fullName evidence="2">Beta-(1--&gt;2)glucan export ATP-binding/permease protein NdvA</fullName>
        <ecNumber evidence="2">7.5.2.3</ecNumber>
    </recommendedName>
</protein>
<sequence length="602" mass="65967">MSLFRLYTRVLELLGKERRLGWTLAVANLLLATAQFAEPVLFGRIIDVMSGNLATGALVPETRSPWPLLAAWVGFGLFTILCSATVALHADRLAHRQRQAVLTSYFEHILQLPLTFHTGTHSGRLMKVMLQGTDALWRVWLGFFREHFAAILSLVVLLPLSLYINWRLAILLFALCGVFTVLTTLVVRKTYGMQNEVEAQYSDLSARASDALGNVALVQSYVRVDAEVQGLRFVADKLLAAQMPVLSWWALVTVITRASTTITVLAIFSLGIALNQQGLTSVGEIVMFVSFATLLIQRLEQVVSFVNSLMMEAPRLQEFITVLDAVPAVRDRPDAIDPGRLSGLVEFLDVSFSYDGKRPAIEDLSFTALPGQTIALVGATGAGKSTAIALLHRAFDPQSGVVKIDGMDVRGLTMSGLRRNIGVVFQEALLFNRSIAENLRVGKPDATDAELRLAAERAQALDFIDRNDLGFDTNAGERGRMLSGGERQRLSIARALLKDPPILILDEATSALDAVTEAKVNLALDEVMKGRTTFVIAHRLSTIRHATRILVFDNGKVIESGTFDELVAQRGRFAELARAQFMVQEEARAAVATATDDAPVRL</sequence>
<comment type="function">
    <text evidence="1">Involved in beta-(1--&gt;2)glucan export. Transmembrane domains (TMD) form a pore in the inner membrane and the ATP-binding domain (NBD) is responsible for energy generation (By similarity).</text>
</comment>
<comment type="catalytic activity">
    <reaction evidence="2">
        <text>[(1-&gt;2)-beta-D-glucosyl](n)(in) + ATP + H2O = [(1-&gt;2)-beta-D-glucosyl](n)(out) + ADP + phosphate + H(+)</text>
        <dbReference type="Rhea" id="RHEA:18453"/>
        <dbReference type="Rhea" id="RHEA-COMP:11881"/>
        <dbReference type="ChEBI" id="CHEBI:15377"/>
        <dbReference type="ChEBI" id="CHEBI:15378"/>
        <dbReference type="ChEBI" id="CHEBI:27517"/>
        <dbReference type="ChEBI" id="CHEBI:30616"/>
        <dbReference type="ChEBI" id="CHEBI:43474"/>
        <dbReference type="ChEBI" id="CHEBI:456216"/>
        <dbReference type="EC" id="7.5.2.3"/>
    </reaction>
</comment>
<comment type="subunit">
    <text evidence="2">Homodimer.</text>
</comment>
<comment type="subcellular location">
    <subcellularLocation>
        <location evidence="2">Cell inner membrane</location>
        <topology evidence="2">Multi-pass membrane protein</topology>
    </subcellularLocation>
</comment>
<comment type="domain">
    <text>In NdvA the ATP-binding domain (NBD) and the transmembrane domain (TMD) are fused.</text>
</comment>
<comment type="similarity">
    <text evidence="2">Belongs to the ABC transporter superfamily. Beta-(1--&gt;2)glucan exporter (TC 3.A.1.108.1) family.</text>
</comment>
<evidence type="ECO:0000250" key="1"/>
<evidence type="ECO:0000255" key="2">
    <source>
        <dbReference type="HAMAP-Rule" id="MF_01728"/>
    </source>
</evidence>
<name>NDVA_RHOPS</name>
<organism>
    <name type="scientific">Rhodopseudomonas palustris (strain BisB5)</name>
    <dbReference type="NCBI Taxonomy" id="316057"/>
    <lineage>
        <taxon>Bacteria</taxon>
        <taxon>Pseudomonadati</taxon>
        <taxon>Pseudomonadota</taxon>
        <taxon>Alphaproteobacteria</taxon>
        <taxon>Hyphomicrobiales</taxon>
        <taxon>Nitrobacteraceae</taxon>
        <taxon>Rhodopseudomonas</taxon>
    </lineage>
</organism>
<accession>Q13BH6</accession>